<feature type="initiator methionine" description="Removed" evidence="1">
    <location>
        <position position="1"/>
    </location>
</feature>
<feature type="chain" id="PRO_0000359620" description="Photosystem II D2 protein">
    <location>
        <begin position="2"/>
        <end position="353"/>
    </location>
</feature>
<feature type="transmembrane region" description="Helical" evidence="2">
    <location>
        <begin position="41"/>
        <end position="61"/>
    </location>
</feature>
<feature type="transmembrane region" description="Helical" evidence="2">
    <location>
        <begin position="125"/>
        <end position="141"/>
    </location>
</feature>
<feature type="transmembrane region" description="Helical" evidence="2">
    <location>
        <begin position="153"/>
        <end position="166"/>
    </location>
</feature>
<feature type="transmembrane region" description="Helical" evidence="2">
    <location>
        <begin position="208"/>
        <end position="228"/>
    </location>
</feature>
<feature type="transmembrane region" description="Helical" evidence="2">
    <location>
        <begin position="279"/>
        <end position="295"/>
    </location>
</feature>
<feature type="binding site" description="axial binding residue" evidence="2">
    <location>
        <position position="118"/>
    </location>
    <ligand>
        <name>chlorophyll a</name>
        <dbReference type="ChEBI" id="CHEBI:58416"/>
        <label>ChlzD2</label>
    </ligand>
    <ligandPart>
        <name>Mg</name>
        <dbReference type="ChEBI" id="CHEBI:25107"/>
    </ligandPart>
</feature>
<feature type="binding site" evidence="2">
    <location>
        <position position="130"/>
    </location>
    <ligand>
        <name>pheophytin a</name>
        <dbReference type="ChEBI" id="CHEBI:136840"/>
        <label>D2</label>
    </ligand>
</feature>
<feature type="binding site" evidence="2">
    <location>
        <position position="143"/>
    </location>
    <ligand>
        <name>pheophytin a</name>
        <dbReference type="ChEBI" id="CHEBI:136840"/>
        <label>D2</label>
    </ligand>
</feature>
<feature type="binding site" description="axial binding residue" evidence="2">
    <location>
        <position position="198"/>
    </location>
    <ligand>
        <name>chlorophyll a</name>
        <dbReference type="ChEBI" id="CHEBI:58416"/>
        <label>PD2</label>
    </ligand>
    <ligandPart>
        <name>Mg</name>
        <dbReference type="ChEBI" id="CHEBI:25107"/>
    </ligandPart>
</feature>
<feature type="binding site" evidence="2">
    <location>
        <position position="215"/>
    </location>
    <ligand>
        <name>a plastoquinone</name>
        <dbReference type="ChEBI" id="CHEBI:17757"/>
        <label>Q(A)</label>
    </ligand>
</feature>
<feature type="binding site" evidence="2">
    <location>
        <position position="215"/>
    </location>
    <ligand>
        <name>Fe cation</name>
        <dbReference type="ChEBI" id="CHEBI:24875"/>
        <note>ligand shared with heterodimeric partner</note>
    </ligand>
</feature>
<feature type="binding site" evidence="2">
    <location>
        <position position="262"/>
    </location>
    <ligand>
        <name>a plastoquinone</name>
        <dbReference type="ChEBI" id="CHEBI:17757"/>
        <label>Q(A)</label>
    </ligand>
</feature>
<feature type="binding site" evidence="2">
    <location>
        <position position="269"/>
    </location>
    <ligand>
        <name>Fe cation</name>
        <dbReference type="ChEBI" id="CHEBI:24875"/>
        <note>ligand shared with heterodimeric partner</note>
    </ligand>
</feature>
<feature type="modified residue" description="N-acetylthreonine" evidence="1">
    <location>
        <position position="2"/>
    </location>
</feature>
<feature type="modified residue" description="Phosphothreonine" evidence="1">
    <location>
        <position position="2"/>
    </location>
</feature>
<comment type="function">
    <text evidence="2">Photosystem II (PSII) is a light-driven water:plastoquinone oxidoreductase that uses light energy to abstract electrons from H(2)O, generating O(2) and a proton gradient subsequently used for ATP formation. It consists of a core antenna complex that captures photons, and an electron transfer chain that converts photonic excitation into a charge separation. The D1/D2 (PsbA/PsbD) reaction center heterodimer binds P680, the primary electron donor of PSII as well as several subsequent electron acceptors. D2 is needed for assembly of a stable PSII complex.</text>
</comment>
<comment type="catalytic activity">
    <reaction evidence="2">
        <text>2 a plastoquinone + 4 hnu + 2 H2O = 2 a plastoquinol + O2</text>
        <dbReference type="Rhea" id="RHEA:36359"/>
        <dbReference type="Rhea" id="RHEA-COMP:9561"/>
        <dbReference type="Rhea" id="RHEA-COMP:9562"/>
        <dbReference type="ChEBI" id="CHEBI:15377"/>
        <dbReference type="ChEBI" id="CHEBI:15379"/>
        <dbReference type="ChEBI" id="CHEBI:17757"/>
        <dbReference type="ChEBI" id="CHEBI:30212"/>
        <dbReference type="ChEBI" id="CHEBI:62192"/>
        <dbReference type="EC" id="1.10.3.9"/>
    </reaction>
</comment>
<comment type="cofactor">
    <text evidence="2">The D1/D2 heterodimer binds P680, chlorophylls that are the primary electron donor of PSII, and subsequent electron acceptors. It shares a non-heme iron and each subunit binds pheophytin, quinone, additional chlorophylls, carotenoids and lipids. There is also a Cl(-1) ion associated with D1 and D2, which is required for oxygen evolution. The PSII complex binds additional chlorophylls, carotenoids and specific lipids.</text>
</comment>
<comment type="subunit">
    <text evidence="2">PSII is composed of 1 copy each of membrane proteins PsbA, PsbB, PsbC, PsbD, PsbE, PsbF, PsbH, PsbI, PsbJ, PsbK, PsbL, PsbM, PsbT, PsbX, PsbY, PsbZ, Psb30/Ycf12, at least 3 peripheral proteins of the oxygen-evolving complex and a large number of cofactors. It forms dimeric complexes.</text>
</comment>
<comment type="subcellular location">
    <subcellularLocation>
        <location evidence="2">Plastid</location>
        <location evidence="2">Chloroplast thylakoid membrane</location>
        <topology evidence="2">Multi-pass membrane protein</topology>
    </subcellularLocation>
</comment>
<comment type="miscellaneous">
    <text evidence="2">2 of the reaction center chlorophylls (ChlD1 and ChlD2) are entirely coordinated by water.</text>
</comment>
<comment type="similarity">
    <text evidence="2">Belongs to the reaction center PufL/M/PsbA/D family.</text>
</comment>
<dbReference type="EC" id="1.10.3.9" evidence="2"/>
<dbReference type="EMBL" id="AJ506156">
    <property type="protein sequence ID" value="CAD45102.1"/>
    <property type="molecule type" value="Genomic_DNA"/>
</dbReference>
<dbReference type="RefSeq" id="NP_904094.1">
    <property type="nucleotide sequence ID" value="NC_005086.1"/>
</dbReference>
<dbReference type="SMR" id="Q70Y08"/>
<dbReference type="STRING" id="13333.Q70Y08"/>
<dbReference type="GeneID" id="2546568"/>
<dbReference type="KEGG" id="atr:2546568"/>
<dbReference type="OrthoDB" id="34776at2759"/>
<dbReference type="Proteomes" id="UP000017836">
    <property type="component" value="Chloroplast"/>
</dbReference>
<dbReference type="GO" id="GO:0009535">
    <property type="term" value="C:chloroplast thylakoid membrane"/>
    <property type="evidence" value="ECO:0007669"/>
    <property type="project" value="UniProtKB-SubCell"/>
</dbReference>
<dbReference type="GO" id="GO:0009523">
    <property type="term" value="C:photosystem II"/>
    <property type="evidence" value="ECO:0000318"/>
    <property type="project" value="GO_Central"/>
</dbReference>
<dbReference type="GO" id="GO:0016168">
    <property type="term" value="F:chlorophyll binding"/>
    <property type="evidence" value="ECO:0007669"/>
    <property type="project" value="UniProtKB-UniRule"/>
</dbReference>
<dbReference type="GO" id="GO:0045156">
    <property type="term" value="F:electron transporter, transferring electrons within the cyclic electron transport pathway of photosynthesis activity"/>
    <property type="evidence" value="ECO:0007669"/>
    <property type="project" value="InterPro"/>
</dbReference>
<dbReference type="GO" id="GO:0005506">
    <property type="term" value="F:iron ion binding"/>
    <property type="evidence" value="ECO:0007669"/>
    <property type="project" value="UniProtKB-UniRule"/>
</dbReference>
<dbReference type="GO" id="GO:0010242">
    <property type="term" value="F:oxygen evolving activity"/>
    <property type="evidence" value="ECO:0007669"/>
    <property type="project" value="UniProtKB-EC"/>
</dbReference>
<dbReference type="GO" id="GO:0009772">
    <property type="term" value="P:photosynthetic electron transport in photosystem II"/>
    <property type="evidence" value="ECO:0007669"/>
    <property type="project" value="InterPro"/>
</dbReference>
<dbReference type="CDD" id="cd09288">
    <property type="entry name" value="Photosystem-II_D2"/>
    <property type="match status" value="1"/>
</dbReference>
<dbReference type="FunFam" id="1.20.85.10:FF:000001">
    <property type="entry name" value="photosystem II D2 protein-like"/>
    <property type="match status" value="1"/>
</dbReference>
<dbReference type="Gene3D" id="1.20.85.10">
    <property type="entry name" value="Photosystem II protein D1-like"/>
    <property type="match status" value="1"/>
</dbReference>
<dbReference type="HAMAP" id="MF_01383">
    <property type="entry name" value="PSII_PsbD_D2"/>
    <property type="match status" value="1"/>
</dbReference>
<dbReference type="InterPro" id="IPR055266">
    <property type="entry name" value="D1/D2"/>
</dbReference>
<dbReference type="InterPro" id="IPR036854">
    <property type="entry name" value="Photo_II_D1/D2_sf"/>
</dbReference>
<dbReference type="InterPro" id="IPR000484">
    <property type="entry name" value="Photo_RC_L/M"/>
</dbReference>
<dbReference type="InterPro" id="IPR055265">
    <property type="entry name" value="Photo_RC_L/M_CS"/>
</dbReference>
<dbReference type="InterPro" id="IPR005868">
    <property type="entry name" value="PSII_PsbD/D2"/>
</dbReference>
<dbReference type="NCBIfam" id="TIGR01152">
    <property type="entry name" value="psbD"/>
    <property type="match status" value="1"/>
</dbReference>
<dbReference type="PANTHER" id="PTHR33149:SF12">
    <property type="entry name" value="PHOTOSYSTEM II D2 PROTEIN"/>
    <property type="match status" value="1"/>
</dbReference>
<dbReference type="PANTHER" id="PTHR33149">
    <property type="entry name" value="PHOTOSYSTEM II PROTEIN D1"/>
    <property type="match status" value="1"/>
</dbReference>
<dbReference type="Pfam" id="PF00124">
    <property type="entry name" value="Photo_RC"/>
    <property type="match status" value="1"/>
</dbReference>
<dbReference type="PRINTS" id="PR00256">
    <property type="entry name" value="REACTNCENTRE"/>
</dbReference>
<dbReference type="SUPFAM" id="SSF81483">
    <property type="entry name" value="Bacterial photosystem II reaction centre, L and M subunits"/>
    <property type="match status" value="1"/>
</dbReference>
<dbReference type="PROSITE" id="PS00244">
    <property type="entry name" value="REACTION_CENTER"/>
    <property type="match status" value="1"/>
</dbReference>
<geneLocation type="chloroplast"/>
<organism>
    <name type="scientific">Amborella trichopoda</name>
    <dbReference type="NCBI Taxonomy" id="13333"/>
    <lineage>
        <taxon>Eukaryota</taxon>
        <taxon>Viridiplantae</taxon>
        <taxon>Streptophyta</taxon>
        <taxon>Embryophyta</taxon>
        <taxon>Tracheophyta</taxon>
        <taxon>Spermatophyta</taxon>
        <taxon>Magnoliopsida</taxon>
        <taxon>Amborellales</taxon>
        <taxon>Amborellaceae</taxon>
        <taxon>Amborella</taxon>
    </lineage>
</organism>
<accession>Q70Y08</accession>
<proteinExistence type="inferred from homology"/>
<keyword id="KW-0007">Acetylation</keyword>
<keyword id="KW-0148">Chlorophyll</keyword>
<keyword id="KW-0150">Chloroplast</keyword>
<keyword id="KW-0157">Chromophore</keyword>
<keyword id="KW-0249">Electron transport</keyword>
<keyword id="KW-0408">Iron</keyword>
<keyword id="KW-0460">Magnesium</keyword>
<keyword id="KW-0472">Membrane</keyword>
<keyword id="KW-0479">Metal-binding</keyword>
<keyword id="KW-0560">Oxidoreductase</keyword>
<keyword id="KW-0597">Phosphoprotein</keyword>
<keyword id="KW-0602">Photosynthesis</keyword>
<keyword id="KW-0604">Photosystem II</keyword>
<keyword id="KW-0934">Plastid</keyword>
<keyword id="KW-1185">Reference proteome</keyword>
<keyword id="KW-0793">Thylakoid</keyword>
<keyword id="KW-0812">Transmembrane</keyword>
<keyword id="KW-1133">Transmembrane helix</keyword>
<keyword id="KW-0813">Transport</keyword>
<name>PSBD_AMBTC</name>
<sequence length="353" mass="39592">MTIALGRFSKEENDLFDIMDDWLRRDRFVFVGWSGLLLFPCAYFALGGWFTGTTFVTSWYTHGLASSYLEGCNFLTAAVSTPANSLAHSLLLLWGPEAQGDFTRWCQLGGLWTFVALHGAFGLIGFMLRQFELARSVQLRPYNAIAFSAPIAVFVSVFLIYPLGQSGWFFAPSFGVAAIFRFILFFQGFHNWTLNPFHMMGVAGVLGAALLCAIHGATVENTLFEDGDGANTFRAFNPTQAEETYSMVTANRFWSQIFGVAFSNKRWLHFFMLFVPVTGLWMSALGVVGLALNLRAYDFVSQEIRAAEDPEFETFYTKNILLNEGIRAWMAAQDQPHENLIFPEEVLPRGNAL</sequence>
<gene>
    <name evidence="2" type="primary">psbD</name>
</gene>
<evidence type="ECO:0000250" key="1">
    <source>
        <dbReference type="UniProtKB" id="P56761"/>
    </source>
</evidence>
<evidence type="ECO:0000255" key="2">
    <source>
        <dbReference type="HAMAP-Rule" id="MF_01383"/>
    </source>
</evidence>
<protein>
    <recommendedName>
        <fullName evidence="2">Photosystem II D2 protein</fullName>
        <shortName evidence="2">PSII D2 protein</shortName>
        <ecNumber evidence="2">1.10.3.9</ecNumber>
    </recommendedName>
    <alternativeName>
        <fullName evidence="2">Photosystem Q(A) protein</fullName>
    </alternativeName>
</protein>
<reference key="1">
    <citation type="journal article" date="2003" name="Mol. Biol. Evol.">
        <title>Analysis of the Amborella trichopoda chloroplast genome sequence suggests that Amborella is not a basal angiosperm.</title>
        <authorList>
            <person name="Goremykin V.V."/>
            <person name="Hirsch-Ernst K.I."/>
            <person name="Wolfl S."/>
            <person name="Hellwig F.H."/>
        </authorList>
    </citation>
    <scope>NUCLEOTIDE SEQUENCE [LARGE SCALE GENOMIC DNA]</scope>
</reference>